<gene>
    <name type="primary">Hsp70Bbb</name>
    <name type="ORF">CG5834</name>
</gene>
<evidence type="ECO:0000255" key="1">
    <source>
        <dbReference type="RuleBase" id="RU003322"/>
    </source>
</evidence>
<evidence type="ECO:0000256" key="2">
    <source>
        <dbReference type="SAM" id="MobiDB-lite"/>
    </source>
</evidence>
<evidence type="ECO:0000269" key="3">
    <source>
    </source>
</evidence>
<evidence type="ECO:0000269" key="4">
    <source>
    </source>
</evidence>
<evidence type="ECO:0000269" key="5">
    <source>
    </source>
</evidence>
<evidence type="ECO:0000305" key="6"/>
<evidence type="ECO:0000312" key="7">
    <source>
        <dbReference type="EMBL" id="AAF54830.2"/>
    </source>
</evidence>
<dbReference type="EMBL" id="AE014297">
    <property type="protein sequence ID" value="AAF54830.2"/>
    <property type="molecule type" value="Genomic_DNA"/>
</dbReference>
<dbReference type="RefSeq" id="NP_788663.1">
    <property type="nucleotide sequence ID" value="NM_176486.2"/>
</dbReference>
<dbReference type="SMR" id="Q9VG58"/>
<dbReference type="BioGRID" id="72503">
    <property type="interactions" value="51"/>
</dbReference>
<dbReference type="FunCoup" id="Q9VG58">
    <property type="interactions" value="363"/>
</dbReference>
<dbReference type="IntAct" id="Q9VG58">
    <property type="interactions" value="3"/>
</dbReference>
<dbReference type="STRING" id="7227.FBpp0082105"/>
<dbReference type="GlyGen" id="Q9VG58">
    <property type="glycosylation" value="1 site"/>
</dbReference>
<dbReference type="PaxDb" id="7227-FBpp0082105"/>
<dbReference type="DNASU" id="50022"/>
<dbReference type="EnsemblMetazoa" id="FBtr0082636">
    <property type="protein sequence ID" value="FBpp0082105"/>
    <property type="gene ID" value="FBgn0051354"/>
</dbReference>
<dbReference type="GeneID" id="50022"/>
<dbReference type="KEGG" id="dme:Dmel_CG5834"/>
<dbReference type="UCSC" id="CG5834-RA">
    <property type="organism name" value="d. melanogaster"/>
</dbReference>
<dbReference type="AGR" id="FB:FBgn0051354"/>
<dbReference type="CTD" id="50022"/>
<dbReference type="FlyBase" id="FBgn0051354">
    <property type="gene designation" value="Hsp70Bbb"/>
</dbReference>
<dbReference type="VEuPathDB" id="VectorBase:FBgn0051354"/>
<dbReference type="eggNOG" id="KOG0101">
    <property type="taxonomic scope" value="Eukaryota"/>
</dbReference>
<dbReference type="GeneTree" id="ENSGT00940000154813"/>
<dbReference type="HOGENOM" id="CLU_005965_3_0_1"/>
<dbReference type="InParanoid" id="Q9VG58"/>
<dbReference type="OMA" id="SEEDKEX"/>
<dbReference type="OrthoDB" id="7877850at2759"/>
<dbReference type="PhylomeDB" id="Q9VG58"/>
<dbReference type="Reactome" id="R-DME-3371497">
    <property type="pathway name" value="HSP90 chaperone cycle for steroid hormone receptors (SHR) in the presence of ligand"/>
</dbReference>
<dbReference type="SignaLink" id="Q9VG58"/>
<dbReference type="BioGRID-ORCS" id="50022">
    <property type="hits" value="0 hits in 3 CRISPR screens"/>
</dbReference>
<dbReference type="GenomeRNAi" id="50022"/>
<dbReference type="PRO" id="PR:Q9VG58"/>
<dbReference type="Proteomes" id="UP000000803">
    <property type="component" value="Chromosome 3R"/>
</dbReference>
<dbReference type="Bgee" id="FBgn0051354">
    <property type="expression patterns" value="Expressed in copper cell (Drosophila) in digestive tract and 108 other cell types or tissues"/>
</dbReference>
<dbReference type="ExpressionAtlas" id="Q9VG58">
    <property type="expression patterns" value="baseline and differential"/>
</dbReference>
<dbReference type="GO" id="GO:0005737">
    <property type="term" value="C:cytoplasm"/>
    <property type="evidence" value="ECO:0000318"/>
    <property type="project" value="GO_Central"/>
</dbReference>
<dbReference type="GO" id="GO:0005829">
    <property type="term" value="C:cytosol"/>
    <property type="evidence" value="ECO:0000318"/>
    <property type="project" value="GO_Central"/>
</dbReference>
<dbReference type="GO" id="GO:0005634">
    <property type="term" value="C:nucleus"/>
    <property type="evidence" value="ECO:0000318"/>
    <property type="project" value="GO_Central"/>
</dbReference>
<dbReference type="GO" id="GO:0005886">
    <property type="term" value="C:plasma membrane"/>
    <property type="evidence" value="ECO:0000318"/>
    <property type="project" value="GO_Central"/>
</dbReference>
<dbReference type="GO" id="GO:0005524">
    <property type="term" value="F:ATP binding"/>
    <property type="evidence" value="ECO:0007669"/>
    <property type="project" value="UniProtKB-KW"/>
</dbReference>
<dbReference type="GO" id="GO:0016887">
    <property type="term" value="F:ATP hydrolysis activity"/>
    <property type="evidence" value="ECO:0000318"/>
    <property type="project" value="GO_Central"/>
</dbReference>
<dbReference type="GO" id="GO:0140662">
    <property type="term" value="F:ATP-dependent protein folding chaperone"/>
    <property type="evidence" value="ECO:0007669"/>
    <property type="project" value="InterPro"/>
</dbReference>
<dbReference type="GO" id="GO:0031072">
    <property type="term" value="F:heat shock protein binding"/>
    <property type="evidence" value="ECO:0000318"/>
    <property type="project" value="GO_Central"/>
</dbReference>
<dbReference type="GO" id="GO:0044183">
    <property type="term" value="F:protein folding chaperone"/>
    <property type="evidence" value="ECO:0000318"/>
    <property type="project" value="GO_Central"/>
</dbReference>
<dbReference type="GO" id="GO:0051085">
    <property type="term" value="P:chaperone cofactor-dependent protein refolding"/>
    <property type="evidence" value="ECO:0000318"/>
    <property type="project" value="GO_Central"/>
</dbReference>
<dbReference type="GO" id="GO:0035080">
    <property type="term" value="P:heat shock-mediated polytene chromosome puffing"/>
    <property type="evidence" value="ECO:0000315"/>
    <property type="project" value="FlyBase"/>
</dbReference>
<dbReference type="GO" id="GO:0042026">
    <property type="term" value="P:protein refolding"/>
    <property type="evidence" value="ECO:0000318"/>
    <property type="project" value="GO_Central"/>
</dbReference>
<dbReference type="GO" id="GO:0009408">
    <property type="term" value="P:response to heat"/>
    <property type="evidence" value="ECO:0000315"/>
    <property type="project" value="FlyBase"/>
</dbReference>
<dbReference type="GO" id="GO:0001666">
    <property type="term" value="P:response to hypoxia"/>
    <property type="evidence" value="ECO:0000315"/>
    <property type="project" value="FlyBase"/>
</dbReference>
<dbReference type="CDD" id="cd10233">
    <property type="entry name" value="ASKHA_NBD_HSP70_HSPA1"/>
    <property type="match status" value="1"/>
</dbReference>
<dbReference type="FunFam" id="2.60.34.10:FF:000002">
    <property type="entry name" value="Heat shock 70 kDa"/>
    <property type="match status" value="1"/>
</dbReference>
<dbReference type="FunFam" id="3.90.640.10:FF:000002">
    <property type="entry name" value="Heat shock 70 kDa"/>
    <property type="match status" value="1"/>
</dbReference>
<dbReference type="FunFam" id="3.30.420.40:FF:000172">
    <property type="entry name" value="Heat shock 70 kDa protein"/>
    <property type="match status" value="1"/>
</dbReference>
<dbReference type="FunFam" id="3.30.30.30:FF:000001">
    <property type="entry name" value="heat shock 70 kDa protein-like"/>
    <property type="match status" value="1"/>
</dbReference>
<dbReference type="FunFam" id="1.20.1270.10:FF:000024">
    <property type="entry name" value="Heat shock protein 70"/>
    <property type="match status" value="1"/>
</dbReference>
<dbReference type="FunFam" id="3.30.420.40:FF:000026">
    <property type="entry name" value="Heat shock protein 70"/>
    <property type="match status" value="1"/>
</dbReference>
<dbReference type="Gene3D" id="1.20.1270.10">
    <property type="match status" value="1"/>
</dbReference>
<dbReference type="Gene3D" id="3.30.30.30">
    <property type="match status" value="1"/>
</dbReference>
<dbReference type="Gene3D" id="3.30.420.40">
    <property type="match status" value="2"/>
</dbReference>
<dbReference type="Gene3D" id="3.90.640.10">
    <property type="entry name" value="Actin, Chain A, domain 4"/>
    <property type="match status" value="1"/>
</dbReference>
<dbReference type="Gene3D" id="2.60.34.10">
    <property type="entry name" value="Substrate Binding Domain Of DNAk, Chain A, domain 1"/>
    <property type="match status" value="1"/>
</dbReference>
<dbReference type="InterPro" id="IPR043129">
    <property type="entry name" value="ATPase_NBD"/>
</dbReference>
<dbReference type="InterPro" id="IPR018181">
    <property type="entry name" value="Heat_shock_70_CS"/>
</dbReference>
<dbReference type="InterPro" id="IPR029048">
    <property type="entry name" value="HSP70_C_sf"/>
</dbReference>
<dbReference type="InterPro" id="IPR029047">
    <property type="entry name" value="HSP70_peptide-bd_sf"/>
</dbReference>
<dbReference type="InterPro" id="IPR013126">
    <property type="entry name" value="Hsp_70_fam"/>
</dbReference>
<dbReference type="NCBIfam" id="NF001413">
    <property type="entry name" value="PRK00290.1"/>
    <property type="match status" value="1"/>
</dbReference>
<dbReference type="PANTHER" id="PTHR19375">
    <property type="entry name" value="HEAT SHOCK PROTEIN 70KDA"/>
    <property type="match status" value="1"/>
</dbReference>
<dbReference type="Pfam" id="PF00012">
    <property type="entry name" value="HSP70"/>
    <property type="match status" value="1"/>
</dbReference>
<dbReference type="PRINTS" id="PR00301">
    <property type="entry name" value="HEATSHOCK70"/>
</dbReference>
<dbReference type="SUPFAM" id="SSF53067">
    <property type="entry name" value="Actin-like ATPase domain"/>
    <property type="match status" value="2"/>
</dbReference>
<dbReference type="SUPFAM" id="SSF100934">
    <property type="entry name" value="Heat shock protein 70kD (HSP70), C-terminal subdomain"/>
    <property type="match status" value="1"/>
</dbReference>
<dbReference type="SUPFAM" id="SSF100920">
    <property type="entry name" value="Heat shock protein 70kD (HSP70), peptide-binding domain"/>
    <property type="match status" value="1"/>
</dbReference>
<dbReference type="PROSITE" id="PS00297">
    <property type="entry name" value="HSP70_1"/>
    <property type="match status" value="1"/>
</dbReference>
<dbReference type="PROSITE" id="PS00329">
    <property type="entry name" value="HSP70_2"/>
    <property type="match status" value="1"/>
</dbReference>
<dbReference type="PROSITE" id="PS01036">
    <property type="entry name" value="HSP70_3"/>
    <property type="match status" value="1"/>
</dbReference>
<comment type="function">
    <text evidence="5">Stress-response chaperone protein that prevents toxic aggregation of proteins.</text>
</comment>
<comment type="subunit">
    <text evidence="4">Forms a complex with Hsp83/Hsp90 and Dpit47.</text>
</comment>
<comment type="induction">
    <text evidence="5">Heat shock induces the synthesis of seven proteins at five otherwise inactive sites in the polytene chromosomes of fruit fly larvae. Two separate sites, producing two and three copies, respectively, code for the 70 kDa protein. Expression is induced by proteotoxic stress caused by toxic protein aggregation, for example by overexpressed Atx-1/ataxin-1 (PubMed:18344983).</text>
</comment>
<comment type="miscellaneous">
    <text evidence="6">There are 5 or 6 copies of the gene encoding this protein at two separate loci, 2 copies at chromosome locus 87A7 in reverse orientation (Hsp70Aa and Hsp70Ab) at locus 87A7, and 3 or 4 copies (depending on strain) at locus 87C1. Most strains have three copies at chromosome locus 87C1; two tandemly repeated Hsp70 genes (Hsp70Bb and Hsp70Bc) and one in reverse orientation (Hsp70Ba). Some strains, including that sequenced in the Drosophila genome project have an additional copy making three tandemly repeated Hsp70 genes (Hsp70Bb, Hsp70Bbb and Hsp70Bc).</text>
</comment>
<comment type="similarity">
    <text evidence="1 6">Belongs to the heat shock protein 70 family.</text>
</comment>
<organism evidence="7">
    <name type="scientific">Drosophila melanogaster</name>
    <name type="common">Fruit fly</name>
    <dbReference type="NCBI Taxonomy" id="7227"/>
    <lineage>
        <taxon>Eukaryota</taxon>
        <taxon>Metazoa</taxon>
        <taxon>Ecdysozoa</taxon>
        <taxon>Arthropoda</taxon>
        <taxon>Hexapoda</taxon>
        <taxon>Insecta</taxon>
        <taxon>Pterygota</taxon>
        <taxon>Neoptera</taxon>
        <taxon>Endopterygota</taxon>
        <taxon>Diptera</taxon>
        <taxon>Brachycera</taxon>
        <taxon>Muscomorpha</taxon>
        <taxon>Ephydroidea</taxon>
        <taxon>Drosophilidae</taxon>
        <taxon>Drosophila</taxon>
        <taxon>Sophophora</taxon>
    </lineage>
</organism>
<reference evidence="6" key="1">
    <citation type="journal article" date="2000" name="Science">
        <title>The genome sequence of Drosophila melanogaster.</title>
        <authorList>
            <person name="Adams M.D."/>
            <person name="Celniker S.E."/>
            <person name="Holt R.A."/>
            <person name="Evans C.A."/>
            <person name="Gocayne J.D."/>
            <person name="Amanatides P.G."/>
            <person name="Scherer S.E."/>
            <person name="Li P.W."/>
            <person name="Hoskins R.A."/>
            <person name="Galle R.F."/>
            <person name="George R.A."/>
            <person name="Lewis S.E."/>
            <person name="Richards S."/>
            <person name="Ashburner M."/>
            <person name="Henderson S.N."/>
            <person name="Sutton G.G."/>
            <person name="Wortman J.R."/>
            <person name="Yandell M.D."/>
            <person name="Zhang Q."/>
            <person name="Chen L.X."/>
            <person name="Brandon R.C."/>
            <person name="Rogers Y.-H.C."/>
            <person name="Blazej R.G."/>
            <person name="Champe M."/>
            <person name="Pfeiffer B.D."/>
            <person name="Wan K.H."/>
            <person name="Doyle C."/>
            <person name="Baxter E.G."/>
            <person name="Helt G."/>
            <person name="Nelson C.R."/>
            <person name="Miklos G.L.G."/>
            <person name="Abril J.F."/>
            <person name="Agbayani A."/>
            <person name="An H.-J."/>
            <person name="Andrews-Pfannkoch C."/>
            <person name="Baldwin D."/>
            <person name="Ballew R.M."/>
            <person name="Basu A."/>
            <person name="Baxendale J."/>
            <person name="Bayraktaroglu L."/>
            <person name="Beasley E.M."/>
            <person name="Beeson K.Y."/>
            <person name="Benos P.V."/>
            <person name="Berman B.P."/>
            <person name="Bhandari D."/>
            <person name="Bolshakov S."/>
            <person name="Borkova D."/>
            <person name="Botchan M.R."/>
            <person name="Bouck J."/>
            <person name="Brokstein P."/>
            <person name="Brottier P."/>
            <person name="Burtis K.C."/>
            <person name="Busam D.A."/>
            <person name="Butler H."/>
            <person name="Cadieu E."/>
            <person name="Center A."/>
            <person name="Chandra I."/>
            <person name="Cherry J.M."/>
            <person name="Cawley S."/>
            <person name="Dahlke C."/>
            <person name="Davenport L.B."/>
            <person name="Davies P."/>
            <person name="de Pablos B."/>
            <person name="Delcher A."/>
            <person name="Deng Z."/>
            <person name="Mays A.D."/>
            <person name="Dew I."/>
            <person name="Dietz S.M."/>
            <person name="Dodson K."/>
            <person name="Doup L.E."/>
            <person name="Downes M."/>
            <person name="Dugan-Rocha S."/>
            <person name="Dunkov B.C."/>
            <person name="Dunn P."/>
            <person name="Durbin K.J."/>
            <person name="Evangelista C.C."/>
            <person name="Ferraz C."/>
            <person name="Ferriera S."/>
            <person name="Fleischmann W."/>
            <person name="Fosler C."/>
            <person name="Gabrielian A.E."/>
            <person name="Garg N.S."/>
            <person name="Gelbart W.M."/>
            <person name="Glasser K."/>
            <person name="Glodek A."/>
            <person name="Gong F."/>
            <person name="Gorrell J.H."/>
            <person name="Gu Z."/>
            <person name="Guan P."/>
            <person name="Harris M."/>
            <person name="Harris N.L."/>
            <person name="Harvey D.A."/>
            <person name="Heiman T.J."/>
            <person name="Hernandez J.R."/>
            <person name="Houck J."/>
            <person name="Hostin D."/>
            <person name="Houston K.A."/>
            <person name="Howland T.J."/>
            <person name="Wei M.-H."/>
            <person name="Ibegwam C."/>
            <person name="Jalali M."/>
            <person name="Kalush F."/>
            <person name="Karpen G.H."/>
            <person name="Ke Z."/>
            <person name="Kennison J.A."/>
            <person name="Ketchum K.A."/>
            <person name="Kimmel B.E."/>
            <person name="Kodira C.D."/>
            <person name="Kraft C.L."/>
            <person name="Kravitz S."/>
            <person name="Kulp D."/>
            <person name="Lai Z."/>
            <person name="Lasko P."/>
            <person name="Lei Y."/>
            <person name="Levitsky A.A."/>
            <person name="Li J.H."/>
            <person name="Li Z."/>
            <person name="Liang Y."/>
            <person name="Lin X."/>
            <person name="Liu X."/>
            <person name="Mattei B."/>
            <person name="McIntosh T.C."/>
            <person name="McLeod M.P."/>
            <person name="McPherson D."/>
            <person name="Merkulov G."/>
            <person name="Milshina N.V."/>
            <person name="Mobarry C."/>
            <person name="Morris J."/>
            <person name="Moshrefi A."/>
            <person name="Mount S.M."/>
            <person name="Moy M."/>
            <person name="Murphy B."/>
            <person name="Murphy L."/>
            <person name="Muzny D.M."/>
            <person name="Nelson D.L."/>
            <person name="Nelson D.R."/>
            <person name="Nelson K.A."/>
            <person name="Nixon K."/>
            <person name="Nusskern D.R."/>
            <person name="Pacleb J.M."/>
            <person name="Palazzolo M."/>
            <person name="Pittman G.S."/>
            <person name="Pan S."/>
            <person name="Pollard J."/>
            <person name="Puri V."/>
            <person name="Reese M.G."/>
            <person name="Reinert K."/>
            <person name="Remington K."/>
            <person name="Saunders R.D.C."/>
            <person name="Scheeler F."/>
            <person name="Shen H."/>
            <person name="Shue B.C."/>
            <person name="Siden-Kiamos I."/>
            <person name="Simpson M."/>
            <person name="Skupski M.P."/>
            <person name="Smith T.J."/>
            <person name="Spier E."/>
            <person name="Spradling A.C."/>
            <person name="Stapleton M."/>
            <person name="Strong R."/>
            <person name="Sun E."/>
            <person name="Svirskas R."/>
            <person name="Tector C."/>
            <person name="Turner R."/>
            <person name="Venter E."/>
            <person name="Wang A.H."/>
            <person name="Wang X."/>
            <person name="Wang Z.-Y."/>
            <person name="Wassarman D.A."/>
            <person name="Weinstock G.M."/>
            <person name="Weissenbach J."/>
            <person name="Williams S.M."/>
            <person name="Woodage T."/>
            <person name="Worley K.C."/>
            <person name="Wu D."/>
            <person name="Yang S."/>
            <person name="Yao Q.A."/>
            <person name="Ye J."/>
            <person name="Yeh R.-F."/>
            <person name="Zaveri J.S."/>
            <person name="Zhan M."/>
            <person name="Zhang G."/>
            <person name="Zhao Q."/>
            <person name="Zheng L."/>
            <person name="Zheng X.H."/>
            <person name="Zhong F.N."/>
            <person name="Zhong W."/>
            <person name="Zhou X."/>
            <person name="Zhu S.C."/>
            <person name="Zhu X."/>
            <person name="Smith H.O."/>
            <person name="Gibbs R.A."/>
            <person name="Myers E.W."/>
            <person name="Rubin G.M."/>
            <person name="Venter J.C."/>
        </authorList>
    </citation>
    <scope>NUCLEOTIDE SEQUENCE [LARGE SCALE GENOMIC DNA]</scope>
    <source>
        <strain evidence="3">Berkeley</strain>
    </source>
</reference>
<reference evidence="6" key="2">
    <citation type="journal article" date="2002" name="Genome Biol.">
        <title>Annotation of the Drosophila melanogaster euchromatic genome: a systematic review.</title>
        <authorList>
            <person name="Misra S."/>
            <person name="Crosby M.A."/>
            <person name="Mungall C.J."/>
            <person name="Matthews B.B."/>
            <person name="Campbell K.S."/>
            <person name="Hradecky P."/>
            <person name="Huang Y."/>
            <person name="Kaminker J.S."/>
            <person name="Millburn G.H."/>
            <person name="Prochnik S.E."/>
            <person name="Smith C.D."/>
            <person name="Tupy J.L."/>
            <person name="Whitfield E.J."/>
            <person name="Bayraktaroglu L."/>
            <person name="Berman B.P."/>
            <person name="Bettencourt B.R."/>
            <person name="Celniker S.E."/>
            <person name="de Grey A.D.N.J."/>
            <person name="Drysdale R.A."/>
            <person name="Harris N.L."/>
            <person name="Richter J."/>
            <person name="Russo S."/>
            <person name="Schroeder A.J."/>
            <person name="Shu S.Q."/>
            <person name="Stapleton M."/>
            <person name="Yamada C."/>
            <person name="Ashburner M."/>
            <person name="Gelbart W.M."/>
            <person name="Rubin G.M."/>
            <person name="Lewis S.E."/>
        </authorList>
    </citation>
    <scope>GENOME REANNOTATION</scope>
    <source>
        <strain>Berkeley</strain>
    </source>
</reference>
<reference key="3">
    <citation type="journal article" date="2001" name="J. Cell Sci.">
        <title>The Drosophila Dpit47 protein is a nuclear Hsp90 co-chaperone that interacts with DNA polymerase alpha.</title>
        <authorList>
            <person name="Crevel G."/>
            <person name="Bates H."/>
            <person name="Huikeshoven H."/>
            <person name="Cotterill S."/>
        </authorList>
    </citation>
    <scope>INTERACTION WITH DPIT47 AND HSP83</scope>
</reference>
<reference key="4">
    <citation type="journal article" date="2008" name="Nature">
        <title>NAD synthase NMNAT acts as a chaperone to protect against neurodegeneration.</title>
        <authorList>
            <person name="Zhai R.G."/>
            <person name="Zhang F."/>
            <person name="Hiesinger P.R."/>
            <person name="Cao Y."/>
            <person name="Haueter C.M."/>
            <person name="Bellen H.J."/>
        </authorList>
    </citation>
    <scope>FUNCTION</scope>
    <scope>INDUCTION BY PROTEOTOXIC STRESS</scope>
</reference>
<keyword id="KW-0067">ATP-binding</keyword>
<keyword id="KW-0547">Nucleotide-binding</keyword>
<keyword id="KW-1185">Reference proteome</keyword>
<keyword id="KW-0346">Stress response</keyword>
<protein>
    <recommendedName>
        <fullName>Major heat shock 70 kDa protein Bbb</fullName>
        <shortName>Heat shock protein 70Bbb</shortName>
    </recommendedName>
    <alternativeName>
        <fullName>HSP70-87C1</fullName>
    </alternativeName>
</protein>
<name>HSP74_DROME</name>
<proteinExistence type="evidence at protein level"/>
<feature type="chain" id="PRO_0000078334" description="Major heat shock 70 kDa protein Bbb">
    <location>
        <begin position="1"/>
        <end position="641"/>
    </location>
</feature>
<feature type="region of interest" description="Disordered" evidence="2">
    <location>
        <begin position="609"/>
        <end position="641"/>
    </location>
</feature>
<feature type="compositionally biased region" description="Gly residues" evidence="2">
    <location>
        <begin position="613"/>
        <end position="633"/>
    </location>
</feature>
<sequence>MPAIGIDLGTTYSCVGVYQHGKVEIIANDQGNRTTPSYVAFTDSERLIGDPAKNQVAMNPRNTVFDAKRLIGRKYDDPKIAEDMKHWPFKVVSDGGKPKIGVEYKGESKRFAPEEISSMVLTKMKETAEAYLGESITDAVITVPAYFNDSQRQATKDAGHIAGLNVLRIINEPTAAALAYGLDKNLKDERNVLIFDLGGGTFDVSILTIDEGSLFEVRSTAGDTHLGGEDFDNRLVTHLAEEFKRKYKKDLRSNPRALRRLRTAAERAKRTLSSSTEATIEIDALFEGQDFYTKVSRARFEELCADLFRNTLQPVEKALNDAKMDKGQIHDIVLVGGSTRIPKVQSLLQEFFHGKNLNLSINPDEAVAYGAAVQAAILSGDQSGKIQDVLLVDVAPLSLGIETAGGVMTKLIERNCRIPCKQTKTFSTYSDNQPGVSIQVYEGERAMTKDNNALGTFDLSGIPPAPRGVPQIEVTFDLDANGILNVSAKEMSTGKAKNITIKNDKGRLSQAEIDRMVNEAEKYADEDEKHRQRITSRNALESYVFNVKQSVEQAPAGKLDEADKNSVLDKCNETIRWLDSNTTAEKEEFDHKMEELTRHCSPIMTKMHQQGAGAAGGPGANCGQQAGGFGGYSGPTVEEVD</sequence>
<accession>Q9VG58</accession>